<keyword id="KW-0150">Chloroplast</keyword>
<keyword id="KW-0249">Electron transport</keyword>
<keyword id="KW-0349">Heme</keyword>
<keyword id="KW-0408">Iron</keyword>
<keyword id="KW-0472">Membrane</keyword>
<keyword id="KW-0479">Metal-binding</keyword>
<keyword id="KW-0602">Photosynthesis</keyword>
<keyword id="KW-0604">Photosystem II</keyword>
<keyword id="KW-0934">Plastid</keyword>
<keyword id="KW-0793">Thylakoid</keyword>
<keyword id="KW-0812">Transmembrane</keyword>
<keyword id="KW-1133">Transmembrane helix</keyword>
<keyword id="KW-0813">Transport</keyword>
<comment type="function">
    <text evidence="1">This b-type cytochrome is tightly associated with the reaction center of photosystem II (PSII). PSII is a light-driven water:plastoquinone oxidoreductase that uses light energy to abstract electrons from H(2)O, generating O(2) and a proton gradient subsequently used for ATP formation. It consists of a core antenna complex that captures photons, and an electron transfer chain that converts photonic excitation into a charge separation.</text>
</comment>
<comment type="cofactor">
    <cofactor evidence="1">
        <name>heme b</name>
        <dbReference type="ChEBI" id="CHEBI:60344"/>
    </cofactor>
    <text evidence="1">With its partner (PsbF) binds heme. PSII binds additional chlorophylls, carotenoids and specific lipids.</text>
</comment>
<comment type="subunit">
    <text evidence="1">Heterodimer of an alpha subunit and a beta subunit. PSII is composed of 1 copy each of membrane proteins PsbA, PsbB, PsbC, PsbD, PsbE, PsbF, PsbH, PsbI, PsbJ, PsbK, PsbL, PsbM, PsbT, PsbX, PsbY, PsbZ, Psb30/Ycf12, at least 3 peripheral proteins of the oxygen-evolving complex and a large number of cofactors. It forms dimeric complexes.</text>
</comment>
<comment type="subcellular location">
    <subcellularLocation>
        <location evidence="1">Plastid</location>
        <location evidence="1">Chloroplast thylakoid membrane</location>
        <topology evidence="1">Single-pass membrane protein</topology>
    </subcellularLocation>
</comment>
<comment type="similarity">
    <text evidence="1">Belongs to the PsbE/PsbF family.</text>
</comment>
<protein>
    <recommendedName>
        <fullName evidence="1">Cytochrome b559 subunit alpha</fullName>
    </recommendedName>
    <alternativeName>
        <fullName evidence="1">PSII reaction center subunit V</fullName>
    </alternativeName>
</protein>
<geneLocation type="chloroplast"/>
<organism>
    <name type="scientific">Cucumis sativus</name>
    <name type="common">Cucumber</name>
    <dbReference type="NCBI Taxonomy" id="3659"/>
    <lineage>
        <taxon>Eukaryota</taxon>
        <taxon>Viridiplantae</taxon>
        <taxon>Streptophyta</taxon>
        <taxon>Embryophyta</taxon>
        <taxon>Tracheophyta</taxon>
        <taxon>Spermatophyta</taxon>
        <taxon>Magnoliopsida</taxon>
        <taxon>eudicotyledons</taxon>
        <taxon>Gunneridae</taxon>
        <taxon>Pentapetalae</taxon>
        <taxon>rosids</taxon>
        <taxon>fabids</taxon>
        <taxon>Cucurbitales</taxon>
        <taxon>Cucurbitaceae</taxon>
        <taxon>Benincaseae</taxon>
        <taxon>Cucumis</taxon>
    </lineage>
</organism>
<dbReference type="EMBL" id="DQ119058">
    <property type="protein sequence ID" value="AAZ94668.1"/>
    <property type="molecule type" value="Genomic_DNA"/>
</dbReference>
<dbReference type="EMBL" id="AJ970307">
    <property type="protein sequence ID" value="CAJ00775.1"/>
    <property type="molecule type" value="Genomic_DNA"/>
</dbReference>
<dbReference type="EMBL" id="DQ865975">
    <property type="protein sequence ID" value="ABI97434.1"/>
    <property type="molecule type" value="Genomic_DNA"/>
</dbReference>
<dbReference type="EMBL" id="DQ865976">
    <property type="protein sequence ID" value="ABI98762.1"/>
    <property type="molecule type" value="Genomic_DNA"/>
</dbReference>
<dbReference type="RefSeq" id="YP_247616.1">
    <property type="nucleotide sequence ID" value="NC_007144.1"/>
</dbReference>
<dbReference type="SMR" id="Q4VZH5"/>
<dbReference type="GeneID" id="3429279"/>
<dbReference type="KEGG" id="csv:3429279"/>
<dbReference type="eggNOG" id="ENOG502S3QA">
    <property type="taxonomic scope" value="Eukaryota"/>
</dbReference>
<dbReference type="OrthoDB" id="1839964at2759"/>
<dbReference type="GO" id="GO:0009535">
    <property type="term" value="C:chloroplast thylakoid membrane"/>
    <property type="evidence" value="ECO:0007669"/>
    <property type="project" value="UniProtKB-SubCell"/>
</dbReference>
<dbReference type="GO" id="GO:0009539">
    <property type="term" value="C:photosystem II reaction center"/>
    <property type="evidence" value="ECO:0007669"/>
    <property type="project" value="InterPro"/>
</dbReference>
<dbReference type="GO" id="GO:0009055">
    <property type="term" value="F:electron transfer activity"/>
    <property type="evidence" value="ECO:0007669"/>
    <property type="project" value="UniProtKB-UniRule"/>
</dbReference>
<dbReference type="GO" id="GO:0020037">
    <property type="term" value="F:heme binding"/>
    <property type="evidence" value="ECO:0007669"/>
    <property type="project" value="InterPro"/>
</dbReference>
<dbReference type="GO" id="GO:0005506">
    <property type="term" value="F:iron ion binding"/>
    <property type="evidence" value="ECO:0007669"/>
    <property type="project" value="UniProtKB-UniRule"/>
</dbReference>
<dbReference type="GO" id="GO:0009767">
    <property type="term" value="P:photosynthetic electron transport chain"/>
    <property type="evidence" value="ECO:0007669"/>
    <property type="project" value="InterPro"/>
</dbReference>
<dbReference type="Gene3D" id="1.20.5.860">
    <property type="entry name" value="Photosystem II cytochrome b559, alpha subunit"/>
    <property type="match status" value="1"/>
</dbReference>
<dbReference type="HAMAP" id="MF_00642">
    <property type="entry name" value="PSII_PsbE"/>
    <property type="match status" value="1"/>
</dbReference>
<dbReference type="InterPro" id="IPR006217">
    <property type="entry name" value="PSII_cyt_b559_asu"/>
</dbReference>
<dbReference type="InterPro" id="IPR037025">
    <property type="entry name" value="PSII_cyt_b559_asu_sf"/>
</dbReference>
<dbReference type="InterPro" id="IPR006216">
    <property type="entry name" value="PSII_cyt_b559_CS"/>
</dbReference>
<dbReference type="InterPro" id="IPR013081">
    <property type="entry name" value="PSII_cyt_b559_N"/>
</dbReference>
<dbReference type="InterPro" id="IPR013082">
    <property type="entry name" value="PSII_cytb559_asu_lum"/>
</dbReference>
<dbReference type="NCBIfam" id="TIGR01332">
    <property type="entry name" value="cyt_b559_alpha"/>
    <property type="match status" value="1"/>
</dbReference>
<dbReference type="PANTHER" id="PTHR33391">
    <property type="entry name" value="CYTOCHROME B559 SUBUNIT BETA-RELATED"/>
    <property type="match status" value="1"/>
</dbReference>
<dbReference type="PANTHER" id="PTHR33391:SF9">
    <property type="entry name" value="CYTOCHROME B559 SUBUNIT BETA-RELATED"/>
    <property type="match status" value="1"/>
</dbReference>
<dbReference type="Pfam" id="PF00283">
    <property type="entry name" value="Cytochrom_B559"/>
    <property type="match status" value="1"/>
</dbReference>
<dbReference type="Pfam" id="PF00284">
    <property type="entry name" value="Cytochrom_B559a"/>
    <property type="match status" value="1"/>
</dbReference>
<dbReference type="PIRSF" id="PIRSF000036">
    <property type="entry name" value="PsbE"/>
    <property type="match status" value="1"/>
</dbReference>
<dbReference type="SUPFAM" id="SSF161045">
    <property type="entry name" value="Cytochrome b559 subunits"/>
    <property type="match status" value="1"/>
</dbReference>
<dbReference type="PROSITE" id="PS00537">
    <property type="entry name" value="CYTOCHROME_B559"/>
    <property type="match status" value="1"/>
</dbReference>
<proteinExistence type="inferred from homology"/>
<name>PSBE_CUCSA</name>
<evidence type="ECO:0000255" key="1">
    <source>
        <dbReference type="HAMAP-Rule" id="MF_00642"/>
    </source>
</evidence>
<accession>Q4VZH5</accession>
<accession>A5J1V1</accession>
<reference key="1">
    <citation type="journal article" date="2006" name="Plant Cell Rep.">
        <title>Complete sequence and organization of the cucumber (Cucumis sativus L. cv. Baekmibaekdadagi) chloroplast genome.</title>
        <authorList>
            <person name="Kim J.-S."/>
            <person name="Jung J.D."/>
            <person name="Lee J.-A."/>
            <person name="Park H.-W."/>
            <person name="Oh K.-H."/>
            <person name="Jeong W.J."/>
            <person name="Choi D.-W."/>
            <person name="Liu J.R."/>
            <person name="Cho K.Y."/>
        </authorList>
    </citation>
    <scope>NUCLEOTIDE SEQUENCE [LARGE SCALE GENOMIC DNA]</scope>
    <source>
        <strain>cv. Baekmibaekdadagi</strain>
    </source>
</reference>
<reference key="2">
    <citation type="journal article" date="2007" name="Cell. Mol. Biol. Lett.">
        <title>The complete structure of the cucumber (Cucumis sativus L.) chloroplast genome: its composition and comparative analysis.</title>
        <authorList>
            <person name="Plader W.W."/>
            <person name="Yukawa Y."/>
            <person name="Sugiura M."/>
            <person name="Malepszy S."/>
        </authorList>
    </citation>
    <scope>NUCLEOTIDE SEQUENCE [LARGE SCALE GENOMIC DNA]</scope>
    <source>
        <strain>cv. Borszczagowski</strain>
    </source>
</reference>
<reference key="3">
    <citation type="journal article" date="2007" name="Genome">
        <title>Sequencing cucumber (Cucumis sativus L.) chloroplast genomes identifies differences between chilling-tolerant and -susceptible cucumber lines.</title>
        <authorList>
            <person name="Chung S.-M."/>
            <person name="Gordon V.S."/>
            <person name="Staub J.E."/>
        </authorList>
    </citation>
    <scope>NUCLEOTIDE SEQUENCE [LARGE SCALE GENOMIC DNA]</scope>
    <source>
        <strain>cv. Chipper</strain>
        <strain>cv. Gy14</strain>
    </source>
</reference>
<feature type="chain" id="PRO_0000233200" description="Cytochrome b559 subunit alpha">
    <location>
        <begin position="1"/>
        <end position="83"/>
    </location>
</feature>
<feature type="transmembrane region" description="Helical" evidence="1">
    <location>
        <begin position="21"/>
        <end position="35"/>
    </location>
</feature>
<feature type="binding site" description="axial binding residue" evidence="1">
    <location>
        <position position="23"/>
    </location>
    <ligand>
        <name>heme</name>
        <dbReference type="ChEBI" id="CHEBI:30413"/>
        <note>ligand shared with beta subunit</note>
    </ligand>
    <ligandPart>
        <name>Fe</name>
        <dbReference type="ChEBI" id="CHEBI:18248"/>
    </ligandPart>
</feature>
<sequence length="83" mass="9387">MSGSTGERSFADIITSIRYWVIHSITIPSLFIAGWLFVSTGLAYDVFGSPRPNEYFTESRQGIPLITGRFDSLEQLDEFSRSF</sequence>
<gene>
    <name evidence="1" type="primary">psbE</name>
    <name type="ordered locus">CsCp057</name>
</gene>